<organism>
    <name type="scientific">Legionella pneumophila (strain Lens)</name>
    <dbReference type="NCBI Taxonomy" id="297245"/>
    <lineage>
        <taxon>Bacteria</taxon>
        <taxon>Pseudomonadati</taxon>
        <taxon>Pseudomonadota</taxon>
        <taxon>Gammaproteobacteria</taxon>
        <taxon>Legionellales</taxon>
        <taxon>Legionellaceae</taxon>
        <taxon>Legionella</taxon>
    </lineage>
</organism>
<sequence>MAIGITACVLSLINYQGLAYSAALINEPIQACVIAREVDLTDDIRTKFAQCLGWQADQSSPVCLGFYKPITVTPLASPDEVRILADTASFYRTQRSTLSGHVEMQQGQRVVNAQTAYVYRDPKTNEVTKIEFLNHVRYLEPDRMMIARKAVVYPQDKSGEVEDVLYRFNTNRSNALLPAWGRASLIKRFANQDYFLKEATYTTCAPQDKAWAIEAESISINNEKGKGIARNAKLRIHEWPVLYTPYLSFPTNRDRKSGFLMPIVGYSNVGGADLGIPYYWNMAPNYDMTLVPHIYTKRGLMLGGQFRYLTSKSTGTFNGNFLPKDKAFGRFLQDNEVEFPQIRGLSTNRWEVNFVDSTQFLSDLQLNVNFQQVSDDYYLQDFSTNLASVTQRQLLRQADLTYTTENWTFRGMGQSYQTLHPINEIPVSPVYERLPQLMARGYYDDLPFNAQLNILGQYDQFHWPNDSWNIALNNMPQGPRFHLNPILSVPMMKPWGYVTPSVQFVENYYDISRNYTWGTSRANYNLTIPRYSLDGGLYFERDLHLKGTYYIQTLEPRLFYLRVPYYNQTLIPVYDSGFMIFNVDQLFRTNRFSGFDRIGDANQLSYALTTRWLEDESGAEKANFSIGQIKYFSERRVQLCQSPTGFCTDNPDTFGNLSSTFGTSPVASRAVYKFNPAWGITGDYIWDPATRATNNADLNLHYQPARNAIINGGYSYLVNGDVTQVRNNDTENNALHQAILSAAWPLSEKWSGIGAYSYNISKNYSMMSFLGVQYDSCCWAMRILGGRTFRSLNEEFEPRYNNNIYLQILLKGLGSVASSDPSGILNTYIPGYYDPFRRR</sequence>
<proteinExistence type="inferred from homology"/>
<feature type="signal peptide" evidence="1">
    <location>
        <begin position="1"/>
        <end position="21"/>
    </location>
</feature>
<feature type="chain" id="PRO_0000281613" description="LPS-assembly protein LptD">
    <location>
        <begin position="22"/>
        <end position="839"/>
    </location>
</feature>
<dbReference type="EMBL" id="CR628337">
    <property type="protein sequence ID" value="CAH14581.1"/>
    <property type="molecule type" value="Genomic_DNA"/>
</dbReference>
<dbReference type="RefSeq" id="WP_011214613.1">
    <property type="nucleotide sequence ID" value="NC_006369.1"/>
</dbReference>
<dbReference type="SMR" id="Q5WZN1"/>
<dbReference type="KEGG" id="lpf:lpl0350"/>
<dbReference type="LegioList" id="lpl0350"/>
<dbReference type="HOGENOM" id="CLU_009039_0_0_6"/>
<dbReference type="Proteomes" id="UP000002517">
    <property type="component" value="Chromosome"/>
</dbReference>
<dbReference type="GO" id="GO:0009279">
    <property type="term" value="C:cell outer membrane"/>
    <property type="evidence" value="ECO:0007669"/>
    <property type="project" value="UniProtKB-SubCell"/>
</dbReference>
<dbReference type="GO" id="GO:1990351">
    <property type="term" value="C:transporter complex"/>
    <property type="evidence" value="ECO:0007669"/>
    <property type="project" value="TreeGrafter"/>
</dbReference>
<dbReference type="GO" id="GO:0043165">
    <property type="term" value="P:Gram-negative-bacterium-type cell outer membrane assembly"/>
    <property type="evidence" value="ECO:0007669"/>
    <property type="project" value="UniProtKB-UniRule"/>
</dbReference>
<dbReference type="GO" id="GO:0015920">
    <property type="term" value="P:lipopolysaccharide transport"/>
    <property type="evidence" value="ECO:0007669"/>
    <property type="project" value="InterPro"/>
</dbReference>
<dbReference type="HAMAP" id="MF_01411">
    <property type="entry name" value="LPS_assembly_LptD"/>
    <property type="match status" value="1"/>
</dbReference>
<dbReference type="InterPro" id="IPR020889">
    <property type="entry name" value="LipoPS_assembly_LptD"/>
</dbReference>
<dbReference type="InterPro" id="IPR050218">
    <property type="entry name" value="LptD"/>
</dbReference>
<dbReference type="InterPro" id="IPR007543">
    <property type="entry name" value="LptD_C"/>
</dbReference>
<dbReference type="InterPro" id="IPR005653">
    <property type="entry name" value="OstA-like_N"/>
</dbReference>
<dbReference type="PANTHER" id="PTHR30189">
    <property type="entry name" value="LPS-ASSEMBLY PROTEIN"/>
    <property type="match status" value="1"/>
</dbReference>
<dbReference type="PANTHER" id="PTHR30189:SF1">
    <property type="entry name" value="LPS-ASSEMBLY PROTEIN LPTD"/>
    <property type="match status" value="1"/>
</dbReference>
<dbReference type="Pfam" id="PF04453">
    <property type="entry name" value="LptD"/>
    <property type="match status" value="1"/>
</dbReference>
<dbReference type="Pfam" id="PF03968">
    <property type="entry name" value="LptD_N"/>
    <property type="match status" value="1"/>
</dbReference>
<reference key="1">
    <citation type="journal article" date="2004" name="Nat. Genet.">
        <title>Evidence in the Legionella pneumophila genome for exploitation of host cell functions and high genome plasticity.</title>
        <authorList>
            <person name="Cazalet C."/>
            <person name="Rusniok C."/>
            <person name="Brueggemann H."/>
            <person name="Zidane N."/>
            <person name="Magnier A."/>
            <person name="Ma L."/>
            <person name="Tichit M."/>
            <person name="Jarraud S."/>
            <person name="Bouchier C."/>
            <person name="Vandenesch F."/>
            <person name="Kunst F."/>
            <person name="Etienne J."/>
            <person name="Glaser P."/>
            <person name="Buchrieser C."/>
        </authorList>
    </citation>
    <scope>NUCLEOTIDE SEQUENCE [LARGE SCALE GENOMIC DNA]</scope>
    <source>
        <strain>Lens</strain>
    </source>
</reference>
<keyword id="KW-0998">Cell outer membrane</keyword>
<keyword id="KW-0472">Membrane</keyword>
<keyword id="KW-0732">Signal</keyword>
<gene>
    <name evidence="1" type="primary">lptD</name>
    <name type="synonym">imp</name>
    <name type="synonym">ostA</name>
    <name type="ordered locus">lpl0350</name>
</gene>
<evidence type="ECO:0000255" key="1">
    <source>
        <dbReference type="HAMAP-Rule" id="MF_01411"/>
    </source>
</evidence>
<comment type="function">
    <text evidence="1">Together with LptE, is involved in the assembly of lipopolysaccharide (LPS) at the surface of the outer membrane.</text>
</comment>
<comment type="subunit">
    <text evidence="1">Component of the lipopolysaccharide transport and assembly complex. Interacts with LptE and LptA.</text>
</comment>
<comment type="subcellular location">
    <subcellularLocation>
        <location evidence="1">Cell outer membrane</location>
    </subcellularLocation>
</comment>
<comment type="similarity">
    <text evidence="1">Belongs to the LptD family.</text>
</comment>
<protein>
    <recommendedName>
        <fullName evidence="1">LPS-assembly protein LptD</fullName>
    </recommendedName>
</protein>
<accession>Q5WZN1</accession>
<name>LPTD_LEGPL</name>